<sequence length="127" mass="14346">MRHRKSGRQLNRNSSHRQAMFRNMASALIGHEIIKTTLPKAKELRRVVEPLITLAKEDSVANRRLAFARTRNVETVAKLFNELGPRFAQRAGGYTRILKCGFRAGDNAPMAYIELVDRPEVAEAATE</sequence>
<keyword id="KW-0687">Ribonucleoprotein</keyword>
<keyword id="KW-0689">Ribosomal protein</keyword>
<evidence type="ECO:0000255" key="1">
    <source>
        <dbReference type="HAMAP-Rule" id="MF_01368"/>
    </source>
</evidence>
<evidence type="ECO:0000305" key="2"/>
<organism>
    <name type="scientific">Actinobacillus pleuropneumoniae serotype 3 (strain JL03)</name>
    <dbReference type="NCBI Taxonomy" id="434271"/>
    <lineage>
        <taxon>Bacteria</taxon>
        <taxon>Pseudomonadati</taxon>
        <taxon>Pseudomonadota</taxon>
        <taxon>Gammaproteobacteria</taxon>
        <taxon>Pasteurellales</taxon>
        <taxon>Pasteurellaceae</taxon>
        <taxon>Actinobacillus</taxon>
    </lineage>
</organism>
<protein>
    <recommendedName>
        <fullName evidence="1">Large ribosomal subunit protein bL17</fullName>
    </recommendedName>
    <alternativeName>
        <fullName evidence="2">50S ribosomal protein L17</fullName>
    </alternativeName>
</protein>
<dbReference type="EMBL" id="CP000687">
    <property type="protein sequence ID" value="ABY70371.1"/>
    <property type="molecule type" value="Genomic_DNA"/>
</dbReference>
<dbReference type="RefSeq" id="WP_005599330.1">
    <property type="nucleotide sequence ID" value="NC_010278.1"/>
</dbReference>
<dbReference type="SMR" id="B0BSV7"/>
<dbReference type="GeneID" id="48600078"/>
<dbReference type="KEGG" id="apj:APJL_1821"/>
<dbReference type="HOGENOM" id="CLU_074407_2_0_6"/>
<dbReference type="Proteomes" id="UP000008547">
    <property type="component" value="Chromosome"/>
</dbReference>
<dbReference type="GO" id="GO:0022625">
    <property type="term" value="C:cytosolic large ribosomal subunit"/>
    <property type="evidence" value="ECO:0007669"/>
    <property type="project" value="TreeGrafter"/>
</dbReference>
<dbReference type="GO" id="GO:0003735">
    <property type="term" value="F:structural constituent of ribosome"/>
    <property type="evidence" value="ECO:0007669"/>
    <property type="project" value="InterPro"/>
</dbReference>
<dbReference type="GO" id="GO:0006412">
    <property type="term" value="P:translation"/>
    <property type="evidence" value="ECO:0007669"/>
    <property type="project" value="UniProtKB-UniRule"/>
</dbReference>
<dbReference type="FunFam" id="3.90.1030.10:FF:000001">
    <property type="entry name" value="50S ribosomal protein L17"/>
    <property type="match status" value="1"/>
</dbReference>
<dbReference type="Gene3D" id="3.90.1030.10">
    <property type="entry name" value="Ribosomal protein L17"/>
    <property type="match status" value="1"/>
</dbReference>
<dbReference type="HAMAP" id="MF_01368">
    <property type="entry name" value="Ribosomal_bL17"/>
    <property type="match status" value="1"/>
</dbReference>
<dbReference type="InterPro" id="IPR000456">
    <property type="entry name" value="Ribosomal_bL17"/>
</dbReference>
<dbReference type="InterPro" id="IPR047859">
    <property type="entry name" value="Ribosomal_bL17_CS"/>
</dbReference>
<dbReference type="InterPro" id="IPR036373">
    <property type="entry name" value="Ribosomal_bL17_sf"/>
</dbReference>
<dbReference type="NCBIfam" id="TIGR00059">
    <property type="entry name" value="L17"/>
    <property type="match status" value="1"/>
</dbReference>
<dbReference type="PANTHER" id="PTHR14413:SF16">
    <property type="entry name" value="LARGE RIBOSOMAL SUBUNIT PROTEIN BL17M"/>
    <property type="match status" value="1"/>
</dbReference>
<dbReference type="PANTHER" id="PTHR14413">
    <property type="entry name" value="RIBOSOMAL PROTEIN L17"/>
    <property type="match status" value="1"/>
</dbReference>
<dbReference type="Pfam" id="PF01196">
    <property type="entry name" value="Ribosomal_L17"/>
    <property type="match status" value="1"/>
</dbReference>
<dbReference type="SUPFAM" id="SSF64263">
    <property type="entry name" value="Prokaryotic ribosomal protein L17"/>
    <property type="match status" value="1"/>
</dbReference>
<dbReference type="PROSITE" id="PS01167">
    <property type="entry name" value="RIBOSOMAL_L17"/>
    <property type="match status" value="1"/>
</dbReference>
<feature type="chain" id="PRO_1000144366" description="Large ribosomal subunit protein bL17">
    <location>
        <begin position="1"/>
        <end position="127"/>
    </location>
</feature>
<comment type="subunit">
    <text evidence="1">Part of the 50S ribosomal subunit. Contacts protein L32.</text>
</comment>
<comment type="similarity">
    <text evidence="1">Belongs to the bacterial ribosomal protein bL17 family.</text>
</comment>
<reference key="1">
    <citation type="journal article" date="2008" name="PLoS ONE">
        <title>Genome biology of Actinobacillus pleuropneumoniae JL03, an isolate of serotype 3 prevalent in China.</title>
        <authorList>
            <person name="Xu Z."/>
            <person name="Zhou Y."/>
            <person name="Li L."/>
            <person name="Zhou R."/>
            <person name="Xiao S."/>
            <person name="Wan Y."/>
            <person name="Zhang S."/>
            <person name="Wang K."/>
            <person name="Li W."/>
            <person name="Li L."/>
            <person name="Jin H."/>
            <person name="Kang M."/>
            <person name="Dalai B."/>
            <person name="Li T."/>
            <person name="Liu L."/>
            <person name="Cheng Y."/>
            <person name="Zhang L."/>
            <person name="Xu T."/>
            <person name="Zheng H."/>
            <person name="Pu S."/>
            <person name="Wang B."/>
            <person name="Gu W."/>
            <person name="Zhang X.L."/>
            <person name="Zhu G.-F."/>
            <person name="Wang S."/>
            <person name="Zhao G.-P."/>
            <person name="Chen H."/>
        </authorList>
    </citation>
    <scope>NUCLEOTIDE SEQUENCE [LARGE SCALE GENOMIC DNA]</scope>
    <source>
        <strain>JL03</strain>
    </source>
</reference>
<gene>
    <name evidence="1" type="primary">rplQ</name>
    <name type="ordered locus">APJL_1821</name>
</gene>
<proteinExistence type="inferred from homology"/>
<accession>B0BSV7</accession>
<name>RL17_ACTPJ</name>